<keyword id="KW-0687">Ribonucleoprotein</keyword>
<keyword id="KW-0689">Ribosomal protein</keyword>
<keyword id="KW-0694">RNA-binding</keyword>
<keyword id="KW-0699">rRNA-binding</keyword>
<protein>
    <recommendedName>
        <fullName evidence="1">Large ribosomal subunit protein bL9</fullName>
    </recommendedName>
    <alternativeName>
        <fullName evidence="2">50S ribosomal protein L9</fullName>
    </alternativeName>
</protein>
<organism>
    <name type="scientific">Campylobacter fetus subsp. fetus (strain 82-40)</name>
    <dbReference type="NCBI Taxonomy" id="360106"/>
    <lineage>
        <taxon>Bacteria</taxon>
        <taxon>Pseudomonadati</taxon>
        <taxon>Campylobacterota</taxon>
        <taxon>Epsilonproteobacteria</taxon>
        <taxon>Campylobacterales</taxon>
        <taxon>Campylobacteraceae</taxon>
        <taxon>Campylobacter</taxon>
    </lineage>
</organism>
<feature type="chain" id="PRO_1000014760" description="Large ribosomal subunit protein bL9">
    <location>
        <begin position="1"/>
        <end position="147"/>
    </location>
</feature>
<sequence>MKVLLIKDVKGLGKAGEVKDVKDGYGNNFLIGKGLAKSATDAVLKQYEAAKKRAQEEINYEINQNEKLKAELENIKIIIKTKLGANGALFGSITKDEIANALKEQKGYEVDKKALECDHIKATGIYDVALKLKHGISAKFKVEVAGE</sequence>
<evidence type="ECO:0000255" key="1">
    <source>
        <dbReference type="HAMAP-Rule" id="MF_00503"/>
    </source>
</evidence>
<evidence type="ECO:0000305" key="2"/>
<dbReference type="EMBL" id="CP000487">
    <property type="protein sequence ID" value="ABK82062.1"/>
    <property type="molecule type" value="Genomic_DNA"/>
</dbReference>
<dbReference type="RefSeq" id="WP_002849551.1">
    <property type="nucleotide sequence ID" value="NC_008599.1"/>
</dbReference>
<dbReference type="SMR" id="A0RPN3"/>
<dbReference type="GeneID" id="61064829"/>
<dbReference type="KEGG" id="cff:CFF8240_1000"/>
<dbReference type="eggNOG" id="COG0359">
    <property type="taxonomic scope" value="Bacteria"/>
</dbReference>
<dbReference type="HOGENOM" id="CLU_078938_3_0_7"/>
<dbReference type="Proteomes" id="UP000000760">
    <property type="component" value="Chromosome"/>
</dbReference>
<dbReference type="GO" id="GO:1990904">
    <property type="term" value="C:ribonucleoprotein complex"/>
    <property type="evidence" value="ECO:0007669"/>
    <property type="project" value="UniProtKB-KW"/>
</dbReference>
<dbReference type="GO" id="GO:0005840">
    <property type="term" value="C:ribosome"/>
    <property type="evidence" value="ECO:0007669"/>
    <property type="project" value="UniProtKB-KW"/>
</dbReference>
<dbReference type="GO" id="GO:0019843">
    <property type="term" value="F:rRNA binding"/>
    <property type="evidence" value="ECO:0007669"/>
    <property type="project" value="UniProtKB-UniRule"/>
</dbReference>
<dbReference type="GO" id="GO:0003735">
    <property type="term" value="F:structural constituent of ribosome"/>
    <property type="evidence" value="ECO:0007669"/>
    <property type="project" value="InterPro"/>
</dbReference>
<dbReference type="GO" id="GO:0006412">
    <property type="term" value="P:translation"/>
    <property type="evidence" value="ECO:0007669"/>
    <property type="project" value="UniProtKB-UniRule"/>
</dbReference>
<dbReference type="FunFam" id="3.40.5.10:FF:000002">
    <property type="entry name" value="50S ribosomal protein L9"/>
    <property type="match status" value="1"/>
</dbReference>
<dbReference type="Gene3D" id="3.10.430.100">
    <property type="entry name" value="Ribosomal protein L9, C-terminal domain"/>
    <property type="match status" value="1"/>
</dbReference>
<dbReference type="Gene3D" id="3.40.5.10">
    <property type="entry name" value="Ribosomal protein L9, N-terminal domain"/>
    <property type="match status" value="1"/>
</dbReference>
<dbReference type="HAMAP" id="MF_00503">
    <property type="entry name" value="Ribosomal_bL9"/>
    <property type="match status" value="1"/>
</dbReference>
<dbReference type="InterPro" id="IPR000244">
    <property type="entry name" value="Ribosomal_bL9"/>
</dbReference>
<dbReference type="InterPro" id="IPR009027">
    <property type="entry name" value="Ribosomal_bL9/RNase_H1_N"/>
</dbReference>
<dbReference type="InterPro" id="IPR020594">
    <property type="entry name" value="Ribosomal_bL9_bac/chp"/>
</dbReference>
<dbReference type="InterPro" id="IPR020069">
    <property type="entry name" value="Ribosomal_bL9_C"/>
</dbReference>
<dbReference type="InterPro" id="IPR036791">
    <property type="entry name" value="Ribosomal_bL9_C_sf"/>
</dbReference>
<dbReference type="InterPro" id="IPR020070">
    <property type="entry name" value="Ribosomal_bL9_N"/>
</dbReference>
<dbReference type="InterPro" id="IPR036935">
    <property type="entry name" value="Ribosomal_bL9_N_sf"/>
</dbReference>
<dbReference type="NCBIfam" id="TIGR00158">
    <property type="entry name" value="L9"/>
    <property type="match status" value="1"/>
</dbReference>
<dbReference type="PANTHER" id="PTHR21368">
    <property type="entry name" value="50S RIBOSOMAL PROTEIN L9"/>
    <property type="match status" value="1"/>
</dbReference>
<dbReference type="Pfam" id="PF03948">
    <property type="entry name" value="Ribosomal_L9_C"/>
    <property type="match status" value="1"/>
</dbReference>
<dbReference type="Pfam" id="PF01281">
    <property type="entry name" value="Ribosomal_L9_N"/>
    <property type="match status" value="1"/>
</dbReference>
<dbReference type="SUPFAM" id="SSF55658">
    <property type="entry name" value="L9 N-domain-like"/>
    <property type="match status" value="1"/>
</dbReference>
<dbReference type="SUPFAM" id="SSF55653">
    <property type="entry name" value="Ribosomal protein L9 C-domain"/>
    <property type="match status" value="1"/>
</dbReference>
<dbReference type="PROSITE" id="PS00651">
    <property type="entry name" value="RIBOSOMAL_L9"/>
    <property type="match status" value="1"/>
</dbReference>
<gene>
    <name evidence="1" type="primary">rplI</name>
    <name type="ordered locus">CFF8240_1000</name>
</gene>
<reference key="1">
    <citation type="submission" date="2006-11" db="EMBL/GenBank/DDBJ databases">
        <title>Sequence of Campylobacter fetus subsp. fetus 82-40.</title>
        <authorList>
            <person name="Fouts D.E."/>
            <person name="Nelson K.E."/>
        </authorList>
    </citation>
    <scope>NUCLEOTIDE SEQUENCE [LARGE SCALE GENOMIC DNA]</scope>
    <source>
        <strain>82-40</strain>
    </source>
</reference>
<comment type="function">
    <text evidence="1">Binds to the 23S rRNA.</text>
</comment>
<comment type="similarity">
    <text evidence="1">Belongs to the bacterial ribosomal protein bL9 family.</text>
</comment>
<accession>A0RPN3</accession>
<proteinExistence type="inferred from homology"/>
<name>RL9_CAMFF</name>